<accession>Q65V80</accession>
<protein>
    <recommendedName>
        <fullName evidence="1">Tyrosine recombinase XerC</fullName>
    </recommendedName>
</protein>
<sequence length="295" mass="34159">MQTYLQKYWNYLRNERQVSSYTLTNYQRQMDAVMKILQENDIQNWRQVSPSVVRFILAQSKKSGLHEKSLALRLSALRQFLAFLVLQGELKVNPAIGISAPKQGKHLPKNINAEQLNKLLDNNSKEPIDLRDKAMLELMYSSGLRLSELQGLNLTSLNFRSREIRVLGKGNKERILPFGRHASHSVQEWLKVRLLFNPKDDALFVSSLGNRMSNRSIQKRMEIWGVRQGLNSHLNPHKLRHSFATQMLEASSDLRAVQELLGHSNLSTTQIYTHLNFQHLAEVYDQAHPRAKRRK</sequence>
<keyword id="KW-0131">Cell cycle</keyword>
<keyword id="KW-0132">Cell division</keyword>
<keyword id="KW-0159">Chromosome partition</keyword>
<keyword id="KW-0963">Cytoplasm</keyword>
<keyword id="KW-0229">DNA integration</keyword>
<keyword id="KW-0233">DNA recombination</keyword>
<keyword id="KW-0238">DNA-binding</keyword>
<proteinExistence type="inferred from homology"/>
<organism>
    <name type="scientific">Mannheimia succiniciproducens (strain KCTC 0769BP / MBEL55E)</name>
    <dbReference type="NCBI Taxonomy" id="221988"/>
    <lineage>
        <taxon>Bacteria</taxon>
        <taxon>Pseudomonadati</taxon>
        <taxon>Pseudomonadota</taxon>
        <taxon>Gammaproteobacteria</taxon>
        <taxon>Pasteurellales</taxon>
        <taxon>Pasteurellaceae</taxon>
        <taxon>Basfia</taxon>
    </lineage>
</organism>
<evidence type="ECO:0000255" key="1">
    <source>
        <dbReference type="HAMAP-Rule" id="MF_01808"/>
    </source>
</evidence>
<evidence type="ECO:0000255" key="2">
    <source>
        <dbReference type="PROSITE-ProRule" id="PRU01246"/>
    </source>
</evidence>
<evidence type="ECO:0000255" key="3">
    <source>
        <dbReference type="PROSITE-ProRule" id="PRU01248"/>
    </source>
</evidence>
<gene>
    <name evidence="1" type="primary">xerC</name>
    <name type="ordered locus">MS0523</name>
</gene>
<name>XERC_MANSM</name>
<dbReference type="EMBL" id="AE016827">
    <property type="protein sequence ID" value="AAU37130.1"/>
    <property type="molecule type" value="Genomic_DNA"/>
</dbReference>
<dbReference type="RefSeq" id="WP_011199702.1">
    <property type="nucleotide sequence ID" value="NC_006300.1"/>
</dbReference>
<dbReference type="SMR" id="Q65V80"/>
<dbReference type="STRING" id="221988.MS0523"/>
<dbReference type="KEGG" id="msu:MS0523"/>
<dbReference type="eggNOG" id="COG4973">
    <property type="taxonomic scope" value="Bacteria"/>
</dbReference>
<dbReference type="HOGENOM" id="CLU_027562_9_0_6"/>
<dbReference type="OrthoDB" id="9801717at2"/>
<dbReference type="Proteomes" id="UP000000607">
    <property type="component" value="Chromosome"/>
</dbReference>
<dbReference type="GO" id="GO:0005737">
    <property type="term" value="C:cytoplasm"/>
    <property type="evidence" value="ECO:0007669"/>
    <property type="project" value="UniProtKB-SubCell"/>
</dbReference>
<dbReference type="GO" id="GO:0003677">
    <property type="term" value="F:DNA binding"/>
    <property type="evidence" value="ECO:0007669"/>
    <property type="project" value="UniProtKB-KW"/>
</dbReference>
<dbReference type="GO" id="GO:0009037">
    <property type="term" value="F:tyrosine-based site-specific recombinase activity"/>
    <property type="evidence" value="ECO:0007669"/>
    <property type="project" value="UniProtKB-UniRule"/>
</dbReference>
<dbReference type="GO" id="GO:0051301">
    <property type="term" value="P:cell division"/>
    <property type="evidence" value="ECO:0007669"/>
    <property type="project" value="UniProtKB-KW"/>
</dbReference>
<dbReference type="GO" id="GO:0007059">
    <property type="term" value="P:chromosome segregation"/>
    <property type="evidence" value="ECO:0007669"/>
    <property type="project" value="UniProtKB-UniRule"/>
</dbReference>
<dbReference type="GO" id="GO:0006313">
    <property type="term" value="P:DNA transposition"/>
    <property type="evidence" value="ECO:0007669"/>
    <property type="project" value="UniProtKB-UniRule"/>
</dbReference>
<dbReference type="CDD" id="cd00798">
    <property type="entry name" value="INT_XerDC_C"/>
    <property type="match status" value="1"/>
</dbReference>
<dbReference type="Gene3D" id="1.10.150.130">
    <property type="match status" value="1"/>
</dbReference>
<dbReference type="Gene3D" id="1.10.443.10">
    <property type="entry name" value="Intergrase catalytic core"/>
    <property type="match status" value="1"/>
</dbReference>
<dbReference type="HAMAP" id="MF_01808">
    <property type="entry name" value="Recomb_XerC_XerD"/>
    <property type="match status" value="1"/>
</dbReference>
<dbReference type="InterPro" id="IPR044068">
    <property type="entry name" value="CB"/>
</dbReference>
<dbReference type="InterPro" id="IPR011010">
    <property type="entry name" value="DNA_brk_join_enz"/>
</dbReference>
<dbReference type="InterPro" id="IPR013762">
    <property type="entry name" value="Integrase-like_cat_sf"/>
</dbReference>
<dbReference type="InterPro" id="IPR002104">
    <property type="entry name" value="Integrase_catalytic"/>
</dbReference>
<dbReference type="InterPro" id="IPR010998">
    <property type="entry name" value="Integrase_recombinase_N"/>
</dbReference>
<dbReference type="InterPro" id="IPR004107">
    <property type="entry name" value="Integrase_SAM-like_N"/>
</dbReference>
<dbReference type="InterPro" id="IPR011931">
    <property type="entry name" value="Recomb_XerC"/>
</dbReference>
<dbReference type="InterPro" id="IPR023009">
    <property type="entry name" value="Tyrosine_recombinase_XerC/XerD"/>
</dbReference>
<dbReference type="InterPro" id="IPR050090">
    <property type="entry name" value="Tyrosine_recombinase_XerCD"/>
</dbReference>
<dbReference type="NCBIfam" id="TIGR02224">
    <property type="entry name" value="recomb_XerC"/>
    <property type="match status" value="1"/>
</dbReference>
<dbReference type="PANTHER" id="PTHR30349">
    <property type="entry name" value="PHAGE INTEGRASE-RELATED"/>
    <property type="match status" value="1"/>
</dbReference>
<dbReference type="PANTHER" id="PTHR30349:SF81">
    <property type="entry name" value="TYROSINE RECOMBINASE XERC"/>
    <property type="match status" value="1"/>
</dbReference>
<dbReference type="Pfam" id="PF02899">
    <property type="entry name" value="Phage_int_SAM_1"/>
    <property type="match status" value="1"/>
</dbReference>
<dbReference type="Pfam" id="PF00589">
    <property type="entry name" value="Phage_integrase"/>
    <property type="match status" value="1"/>
</dbReference>
<dbReference type="SUPFAM" id="SSF56349">
    <property type="entry name" value="DNA breaking-rejoining enzymes"/>
    <property type="match status" value="1"/>
</dbReference>
<dbReference type="SUPFAM" id="SSF47823">
    <property type="entry name" value="lambda integrase-like, N-terminal domain"/>
    <property type="match status" value="1"/>
</dbReference>
<dbReference type="PROSITE" id="PS51900">
    <property type="entry name" value="CB"/>
    <property type="match status" value="1"/>
</dbReference>
<dbReference type="PROSITE" id="PS51898">
    <property type="entry name" value="TYR_RECOMBINASE"/>
    <property type="match status" value="1"/>
</dbReference>
<feature type="chain" id="PRO_1000070011" description="Tyrosine recombinase XerC">
    <location>
        <begin position="1"/>
        <end position="295"/>
    </location>
</feature>
<feature type="domain" description="Core-binding (CB)" evidence="3">
    <location>
        <begin position="1"/>
        <end position="85"/>
    </location>
</feature>
<feature type="domain" description="Tyr recombinase" evidence="2">
    <location>
        <begin position="106"/>
        <end position="285"/>
    </location>
</feature>
<feature type="active site" evidence="1">
    <location>
        <position position="145"/>
    </location>
</feature>
<feature type="active site" evidence="1">
    <location>
        <position position="169"/>
    </location>
</feature>
<feature type="active site" evidence="1">
    <location>
        <position position="237"/>
    </location>
</feature>
<feature type="active site" evidence="1">
    <location>
        <position position="240"/>
    </location>
</feature>
<feature type="active site" evidence="1">
    <location>
        <position position="263"/>
    </location>
</feature>
<feature type="active site" description="O-(3'-phospho-DNA)-tyrosine intermediate" evidence="1">
    <location>
        <position position="272"/>
    </location>
</feature>
<reference key="1">
    <citation type="journal article" date="2004" name="Nat. Biotechnol.">
        <title>The genome sequence of the capnophilic rumen bacterium Mannheimia succiniciproducens.</title>
        <authorList>
            <person name="Hong S.H."/>
            <person name="Kim J.S."/>
            <person name="Lee S.Y."/>
            <person name="In Y.H."/>
            <person name="Choi S.S."/>
            <person name="Rih J.-K."/>
            <person name="Kim C.H."/>
            <person name="Jeong H."/>
            <person name="Hur C.G."/>
            <person name="Kim J.J."/>
        </authorList>
    </citation>
    <scope>NUCLEOTIDE SEQUENCE [LARGE SCALE GENOMIC DNA]</scope>
    <source>
        <strain>KCTC 0769BP / MBEL55E</strain>
    </source>
</reference>
<comment type="function">
    <text evidence="1">Site-specific tyrosine recombinase, which acts by catalyzing the cutting and rejoining of the recombining DNA molecules. The XerC-XerD complex is essential to convert dimers of the bacterial chromosome into monomers to permit their segregation at cell division. It also contributes to the segregational stability of plasmids.</text>
</comment>
<comment type="subunit">
    <text evidence="1">Forms a cyclic heterotetrameric complex composed of two molecules of XerC and two molecules of XerD.</text>
</comment>
<comment type="subcellular location">
    <subcellularLocation>
        <location evidence="1">Cytoplasm</location>
    </subcellularLocation>
</comment>
<comment type="similarity">
    <text evidence="1">Belongs to the 'phage' integrase family. XerC subfamily.</text>
</comment>